<organism>
    <name type="scientific">Xylella fastidiosa (strain Temecula1 / ATCC 700964)</name>
    <dbReference type="NCBI Taxonomy" id="183190"/>
    <lineage>
        <taxon>Bacteria</taxon>
        <taxon>Pseudomonadati</taxon>
        <taxon>Pseudomonadota</taxon>
        <taxon>Gammaproteobacteria</taxon>
        <taxon>Lysobacterales</taxon>
        <taxon>Lysobacteraceae</taxon>
        <taxon>Xylella</taxon>
    </lineage>
</organism>
<feature type="chain" id="PRO_0000091625" description="3-hydroxydecanoyl-[acyl-carrier-protein] dehydratase">
    <location>
        <begin position="1"/>
        <end position="172"/>
    </location>
</feature>
<feature type="active site" evidence="1">
    <location>
        <position position="70"/>
    </location>
</feature>
<proteinExistence type="inferred from homology"/>
<dbReference type="EC" id="4.2.1.59" evidence="1"/>
<dbReference type="EC" id="5.3.3.14" evidence="1"/>
<dbReference type="EMBL" id="AE009442">
    <property type="protein sequence ID" value="AAO29414.1"/>
    <property type="status" value="ALT_INIT"/>
    <property type="molecule type" value="Genomic_DNA"/>
</dbReference>
<dbReference type="RefSeq" id="WP_004088753.1">
    <property type="nucleotide sequence ID" value="NC_004556.1"/>
</dbReference>
<dbReference type="SMR" id="Q87B86"/>
<dbReference type="GeneID" id="93905399"/>
<dbReference type="KEGG" id="xft:PD_1572"/>
<dbReference type="HOGENOM" id="CLU_097925_0_0_6"/>
<dbReference type="UniPathway" id="UPA00094"/>
<dbReference type="Proteomes" id="UP000002516">
    <property type="component" value="Chromosome"/>
</dbReference>
<dbReference type="GO" id="GO:0005737">
    <property type="term" value="C:cytoplasm"/>
    <property type="evidence" value="ECO:0007669"/>
    <property type="project" value="UniProtKB-SubCell"/>
</dbReference>
<dbReference type="GO" id="GO:0019171">
    <property type="term" value="F:(3R)-hydroxyacyl-[acyl-carrier-protein] dehydratase activity"/>
    <property type="evidence" value="ECO:0007669"/>
    <property type="project" value="UniProtKB-UniRule"/>
</dbReference>
<dbReference type="GO" id="GO:0034017">
    <property type="term" value="F:trans-2-decenoyl-acyl-carrier-protein isomerase activity"/>
    <property type="evidence" value="ECO:0007669"/>
    <property type="project" value="UniProtKB-UniRule"/>
</dbReference>
<dbReference type="GO" id="GO:0006636">
    <property type="term" value="P:unsaturated fatty acid biosynthetic process"/>
    <property type="evidence" value="ECO:0007669"/>
    <property type="project" value="UniProtKB-UniRule"/>
</dbReference>
<dbReference type="Gene3D" id="3.10.129.10">
    <property type="entry name" value="Hotdog Thioesterase"/>
    <property type="match status" value="1"/>
</dbReference>
<dbReference type="HAMAP" id="MF_00405">
    <property type="entry name" value="FabA"/>
    <property type="match status" value="1"/>
</dbReference>
<dbReference type="InterPro" id="IPR010083">
    <property type="entry name" value="FabA"/>
</dbReference>
<dbReference type="InterPro" id="IPR013114">
    <property type="entry name" value="FabA_FabZ"/>
</dbReference>
<dbReference type="InterPro" id="IPR029069">
    <property type="entry name" value="HotDog_dom_sf"/>
</dbReference>
<dbReference type="NCBIfam" id="TIGR01749">
    <property type="entry name" value="fabA"/>
    <property type="match status" value="1"/>
</dbReference>
<dbReference type="NCBIfam" id="NF003509">
    <property type="entry name" value="PRK05174.1"/>
    <property type="match status" value="1"/>
</dbReference>
<dbReference type="PANTHER" id="PTHR30272">
    <property type="entry name" value="3-HYDROXYACYL-[ACYL-CARRIER-PROTEIN] DEHYDRATASE"/>
    <property type="match status" value="1"/>
</dbReference>
<dbReference type="PANTHER" id="PTHR30272:SF8">
    <property type="entry name" value="3-HYDROXYDECANOYL-[ACYL-CARRIER-PROTEIN] DEHYDRATASE"/>
    <property type="match status" value="1"/>
</dbReference>
<dbReference type="Pfam" id="PF07977">
    <property type="entry name" value="FabA"/>
    <property type="match status" value="1"/>
</dbReference>
<dbReference type="SUPFAM" id="SSF54637">
    <property type="entry name" value="Thioesterase/thiol ester dehydrase-isomerase"/>
    <property type="match status" value="1"/>
</dbReference>
<name>FABA_XYLFT</name>
<accession>Q87B86</accession>
<comment type="function">
    <text evidence="1">Necessary for the introduction of cis unsaturation into fatty acids. Catalyzes the dehydration of (3R)-3-hydroxydecanoyl-ACP to E-(2)-decenoyl-ACP and then its isomerization to Z-(3)-decenoyl-ACP. Can catalyze the dehydratase reaction for beta-hydroxyacyl-ACPs with saturated chain lengths up to 16:0, being most active on intermediate chain length.</text>
</comment>
<comment type="catalytic activity">
    <reaction evidence="1">
        <text>a (3R)-hydroxyacyl-[ACP] = a (2E)-enoyl-[ACP] + H2O</text>
        <dbReference type="Rhea" id="RHEA:13097"/>
        <dbReference type="Rhea" id="RHEA-COMP:9925"/>
        <dbReference type="Rhea" id="RHEA-COMP:9945"/>
        <dbReference type="ChEBI" id="CHEBI:15377"/>
        <dbReference type="ChEBI" id="CHEBI:78784"/>
        <dbReference type="ChEBI" id="CHEBI:78827"/>
        <dbReference type="EC" id="4.2.1.59"/>
    </reaction>
</comment>
<comment type="catalytic activity">
    <reaction evidence="1">
        <text>(3R)-hydroxydecanoyl-[ACP] = (2E)-decenoyl-[ACP] + H2O</text>
        <dbReference type="Rhea" id="RHEA:41860"/>
        <dbReference type="Rhea" id="RHEA-COMP:9638"/>
        <dbReference type="Rhea" id="RHEA-COMP:9639"/>
        <dbReference type="ChEBI" id="CHEBI:15377"/>
        <dbReference type="ChEBI" id="CHEBI:78466"/>
        <dbReference type="ChEBI" id="CHEBI:78467"/>
    </reaction>
</comment>
<comment type="catalytic activity">
    <reaction evidence="1">
        <text>(2E)-decenoyl-[ACP] = (3Z)-decenoyl-[ACP]</text>
        <dbReference type="Rhea" id="RHEA:23568"/>
        <dbReference type="Rhea" id="RHEA-COMP:9639"/>
        <dbReference type="Rhea" id="RHEA-COMP:9927"/>
        <dbReference type="ChEBI" id="CHEBI:78467"/>
        <dbReference type="ChEBI" id="CHEBI:78798"/>
        <dbReference type="EC" id="5.3.3.14"/>
    </reaction>
</comment>
<comment type="pathway">
    <text evidence="1">Lipid metabolism; fatty acid biosynthesis.</text>
</comment>
<comment type="subunit">
    <text evidence="1">Homodimer.</text>
</comment>
<comment type="subcellular location">
    <subcellularLocation>
        <location evidence="1">Cytoplasm</location>
    </subcellularLocation>
</comment>
<comment type="similarity">
    <text evidence="1">Belongs to the thioester dehydratase family. FabA subfamily.</text>
</comment>
<comment type="sequence caution" evidence="2">
    <conflict type="erroneous initiation">
        <sequence resource="EMBL-CDS" id="AAO29414"/>
    </conflict>
</comment>
<protein>
    <recommendedName>
        <fullName evidence="1">3-hydroxydecanoyl-[acyl-carrier-protein] dehydratase</fullName>
        <ecNumber evidence="1">4.2.1.59</ecNumber>
    </recommendedName>
    <alternativeName>
        <fullName evidence="1">3-hydroxyacyl-[acyl-carrier-protein] dehydratase FabA</fullName>
    </alternativeName>
    <alternativeName>
        <fullName evidence="1">Beta-hydroxydecanoyl thioester dehydrase</fullName>
    </alternativeName>
    <alternativeName>
        <fullName evidence="1">Trans-2-decenoyl-[acyl-carrier-protein] isomerase</fullName>
        <ecNumber evidence="1">5.3.3.14</ecNumber>
    </alternativeName>
</protein>
<evidence type="ECO:0000255" key="1">
    <source>
        <dbReference type="HAMAP-Rule" id="MF_00405"/>
    </source>
</evidence>
<evidence type="ECO:0000305" key="2"/>
<gene>
    <name evidence="1" type="primary">fabA</name>
    <name type="ordered locus">PD_1572</name>
</gene>
<reference key="1">
    <citation type="journal article" date="2003" name="J. Bacteriol.">
        <title>Comparative analyses of the complete genome sequences of Pierce's disease and citrus variegated chlorosis strains of Xylella fastidiosa.</title>
        <authorList>
            <person name="Van Sluys M.A."/>
            <person name="de Oliveira M.C."/>
            <person name="Monteiro-Vitorello C.B."/>
            <person name="Miyaki C.Y."/>
            <person name="Furlan L.R."/>
            <person name="Camargo L.E.A."/>
            <person name="da Silva A.C.R."/>
            <person name="Moon D.H."/>
            <person name="Takita M.A."/>
            <person name="Lemos E.G.M."/>
            <person name="Machado M.A."/>
            <person name="Ferro M.I.T."/>
            <person name="da Silva F.R."/>
            <person name="Goldman M.H.S."/>
            <person name="Goldman G.H."/>
            <person name="Lemos M.V.F."/>
            <person name="El-Dorry H."/>
            <person name="Tsai S.M."/>
            <person name="Carrer H."/>
            <person name="Carraro D.M."/>
            <person name="de Oliveira R.C."/>
            <person name="Nunes L.R."/>
            <person name="Siqueira W.J."/>
            <person name="Coutinho L.L."/>
            <person name="Kimura E.T."/>
            <person name="Ferro E.S."/>
            <person name="Harakava R."/>
            <person name="Kuramae E.E."/>
            <person name="Marino C.L."/>
            <person name="Giglioti E."/>
            <person name="Abreu I.L."/>
            <person name="Alves L.M.C."/>
            <person name="do Amaral A.M."/>
            <person name="Baia G.S."/>
            <person name="Blanco S.R."/>
            <person name="Brito M.S."/>
            <person name="Cannavan F.S."/>
            <person name="Celestino A.V."/>
            <person name="da Cunha A.F."/>
            <person name="Fenille R.C."/>
            <person name="Ferro J.A."/>
            <person name="Formighieri E.F."/>
            <person name="Kishi L.T."/>
            <person name="Leoni S.G."/>
            <person name="Oliveira A.R."/>
            <person name="Rosa V.E. Jr."/>
            <person name="Sassaki F.T."/>
            <person name="Sena J.A.D."/>
            <person name="de Souza A.A."/>
            <person name="Truffi D."/>
            <person name="Tsukumo F."/>
            <person name="Yanai G.M."/>
            <person name="Zaros L.G."/>
            <person name="Civerolo E.L."/>
            <person name="Simpson A.J.G."/>
            <person name="Almeida N.F. Jr."/>
            <person name="Setubal J.C."/>
            <person name="Kitajima J.P."/>
        </authorList>
    </citation>
    <scope>NUCLEOTIDE SEQUENCE [LARGE SCALE GENOMIC DNA]</scope>
    <source>
        <strain>Temecula1 / ATCC 700964</strain>
    </source>
</reference>
<sequence>MSRQHAYSREELLATARGELFSHSNARLPNDPMLMFDRITEIYADGGSHGKGIVNAELDIRPDLWFFGCHFLGDPVMPGCLGLDAMWQLTGFFLTWSGATPGYGRALGCGEVKFTGQVLPNAKLVRYEVEMTKIINRTLVIGQANARMLVDNREIYFAKDLRVGMFNNTESF</sequence>
<keyword id="KW-0963">Cytoplasm</keyword>
<keyword id="KW-0275">Fatty acid biosynthesis</keyword>
<keyword id="KW-0276">Fatty acid metabolism</keyword>
<keyword id="KW-0413">Isomerase</keyword>
<keyword id="KW-0444">Lipid biosynthesis</keyword>
<keyword id="KW-0443">Lipid metabolism</keyword>
<keyword id="KW-0456">Lyase</keyword>
<keyword id="KW-1185">Reference proteome</keyword>